<dbReference type="EC" id="4.2.3.4" evidence="1"/>
<dbReference type="EMBL" id="CP000923">
    <property type="protein sequence ID" value="ABY92712.1"/>
    <property type="molecule type" value="Genomic_DNA"/>
</dbReference>
<dbReference type="RefSeq" id="WP_009052283.1">
    <property type="nucleotide sequence ID" value="NC_010320.1"/>
</dbReference>
<dbReference type="SMR" id="B0K0I7"/>
<dbReference type="KEGG" id="tex:Teth514_1423"/>
<dbReference type="HOGENOM" id="CLU_001201_0_2_9"/>
<dbReference type="UniPathway" id="UPA00053">
    <property type="reaction ID" value="UER00085"/>
</dbReference>
<dbReference type="Proteomes" id="UP000002155">
    <property type="component" value="Chromosome"/>
</dbReference>
<dbReference type="GO" id="GO:0005737">
    <property type="term" value="C:cytoplasm"/>
    <property type="evidence" value="ECO:0007669"/>
    <property type="project" value="UniProtKB-SubCell"/>
</dbReference>
<dbReference type="GO" id="GO:0003856">
    <property type="term" value="F:3-dehydroquinate synthase activity"/>
    <property type="evidence" value="ECO:0007669"/>
    <property type="project" value="UniProtKB-UniRule"/>
</dbReference>
<dbReference type="GO" id="GO:0046872">
    <property type="term" value="F:metal ion binding"/>
    <property type="evidence" value="ECO:0007669"/>
    <property type="project" value="UniProtKB-KW"/>
</dbReference>
<dbReference type="GO" id="GO:0000166">
    <property type="term" value="F:nucleotide binding"/>
    <property type="evidence" value="ECO:0007669"/>
    <property type="project" value="UniProtKB-KW"/>
</dbReference>
<dbReference type="GO" id="GO:0008652">
    <property type="term" value="P:amino acid biosynthetic process"/>
    <property type="evidence" value="ECO:0007669"/>
    <property type="project" value="UniProtKB-KW"/>
</dbReference>
<dbReference type="GO" id="GO:0009073">
    <property type="term" value="P:aromatic amino acid family biosynthetic process"/>
    <property type="evidence" value="ECO:0007669"/>
    <property type="project" value="UniProtKB-KW"/>
</dbReference>
<dbReference type="GO" id="GO:0009423">
    <property type="term" value="P:chorismate biosynthetic process"/>
    <property type="evidence" value="ECO:0007669"/>
    <property type="project" value="UniProtKB-UniRule"/>
</dbReference>
<dbReference type="CDD" id="cd08195">
    <property type="entry name" value="DHQS"/>
    <property type="match status" value="1"/>
</dbReference>
<dbReference type="FunFam" id="3.40.50.1970:FF:000001">
    <property type="entry name" value="3-dehydroquinate synthase"/>
    <property type="match status" value="1"/>
</dbReference>
<dbReference type="Gene3D" id="3.40.50.1970">
    <property type="match status" value="1"/>
</dbReference>
<dbReference type="Gene3D" id="1.20.1090.10">
    <property type="entry name" value="Dehydroquinate synthase-like - alpha domain"/>
    <property type="match status" value="1"/>
</dbReference>
<dbReference type="HAMAP" id="MF_00110">
    <property type="entry name" value="DHQ_synthase"/>
    <property type="match status" value="1"/>
</dbReference>
<dbReference type="InterPro" id="IPR050071">
    <property type="entry name" value="Dehydroquinate_synthase"/>
</dbReference>
<dbReference type="InterPro" id="IPR016037">
    <property type="entry name" value="DHQ_synth_AroB"/>
</dbReference>
<dbReference type="InterPro" id="IPR030963">
    <property type="entry name" value="DHQ_synth_fam"/>
</dbReference>
<dbReference type="InterPro" id="IPR030960">
    <property type="entry name" value="DHQS/DOIS_N"/>
</dbReference>
<dbReference type="InterPro" id="IPR056179">
    <property type="entry name" value="DHQS_C"/>
</dbReference>
<dbReference type="NCBIfam" id="TIGR01357">
    <property type="entry name" value="aroB"/>
    <property type="match status" value="1"/>
</dbReference>
<dbReference type="PANTHER" id="PTHR43622">
    <property type="entry name" value="3-DEHYDROQUINATE SYNTHASE"/>
    <property type="match status" value="1"/>
</dbReference>
<dbReference type="PANTHER" id="PTHR43622:SF1">
    <property type="entry name" value="3-DEHYDROQUINATE SYNTHASE"/>
    <property type="match status" value="1"/>
</dbReference>
<dbReference type="Pfam" id="PF01761">
    <property type="entry name" value="DHQ_synthase"/>
    <property type="match status" value="1"/>
</dbReference>
<dbReference type="Pfam" id="PF24621">
    <property type="entry name" value="DHQS_C"/>
    <property type="match status" value="1"/>
</dbReference>
<dbReference type="PIRSF" id="PIRSF001455">
    <property type="entry name" value="DHQ_synth"/>
    <property type="match status" value="1"/>
</dbReference>
<dbReference type="SUPFAM" id="SSF56796">
    <property type="entry name" value="Dehydroquinate synthase-like"/>
    <property type="match status" value="1"/>
</dbReference>
<protein>
    <recommendedName>
        <fullName evidence="1">3-dehydroquinate synthase</fullName>
        <shortName evidence="1">DHQS</shortName>
        <ecNumber evidence="1">4.2.3.4</ecNumber>
    </recommendedName>
</protein>
<accession>B0K0I7</accession>
<keyword id="KW-0028">Amino-acid biosynthesis</keyword>
<keyword id="KW-0057">Aromatic amino acid biosynthesis</keyword>
<keyword id="KW-0170">Cobalt</keyword>
<keyword id="KW-0963">Cytoplasm</keyword>
<keyword id="KW-0456">Lyase</keyword>
<keyword id="KW-0479">Metal-binding</keyword>
<keyword id="KW-0520">NAD</keyword>
<keyword id="KW-0547">Nucleotide-binding</keyword>
<keyword id="KW-0862">Zinc</keyword>
<feature type="chain" id="PRO_1000094648" description="3-dehydroquinate synthase">
    <location>
        <begin position="1"/>
        <end position="356"/>
    </location>
</feature>
<feature type="binding site" evidence="1">
    <location>
        <begin position="106"/>
        <end position="110"/>
    </location>
    <ligand>
        <name>NAD(+)</name>
        <dbReference type="ChEBI" id="CHEBI:57540"/>
    </ligand>
</feature>
<feature type="binding site" evidence="1">
    <location>
        <begin position="130"/>
        <end position="131"/>
    </location>
    <ligand>
        <name>NAD(+)</name>
        <dbReference type="ChEBI" id="CHEBI:57540"/>
    </ligand>
</feature>
<feature type="binding site" evidence="1">
    <location>
        <position position="143"/>
    </location>
    <ligand>
        <name>NAD(+)</name>
        <dbReference type="ChEBI" id="CHEBI:57540"/>
    </ligand>
</feature>
<feature type="binding site" evidence="1">
    <location>
        <position position="152"/>
    </location>
    <ligand>
        <name>NAD(+)</name>
        <dbReference type="ChEBI" id="CHEBI:57540"/>
    </ligand>
</feature>
<feature type="binding site" evidence="1">
    <location>
        <position position="185"/>
    </location>
    <ligand>
        <name>Zn(2+)</name>
        <dbReference type="ChEBI" id="CHEBI:29105"/>
    </ligand>
</feature>
<feature type="binding site" evidence="1">
    <location>
        <position position="248"/>
    </location>
    <ligand>
        <name>Zn(2+)</name>
        <dbReference type="ChEBI" id="CHEBI:29105"/>
    </ligand>
</feature>
<feature type="binding site" evidence="1">
    <location>
        <position position="265"/>
    </location>
    <ligand>
        <name>Zn(2+)</name>
        <dbReference type="ChEBI" id="CHEBI:29105"/>
    </ligand>
</feature>
<gene>
    <name evidence="1" type="primary">aroB</name>
    <name type="ordered locus">Teth514_1423</name>
</gene>
<reference key="1">
    <citation type="submission" date="2008-01" db="EMBL/GenBank/DDBJ databases">
        <title>Complete sequence of Thermoanaerobacter sp. X514.</title>
        <authorList>
            <consortium name="US DOE Joint Genome Institute"/>
            <person name="Copeland A."/>
            <person name="Lucas S."/>
            <person name="Lapidus A."/>
            <person name="Barry K."/>
            <person name="Glavina del Rio T."/>
            <person name="Dalin E."/>
            <person name="Tice H."/>
            <person name="Pitluck S."/>
            <person name="Bruce D."/>
            <person name="Goodwin L."/>
            <person name="Saunders E."/>
            <person name="Brettin T."/>
            <person name="Detter J.C."/>
            <person name="Han C."/>
            <person name="Schmutz J."/>
            <person name="Larimer F."/>
            <person name="Land M."/>
            <person name="Hauser L."/>
            <person name="Kyrpides N."/>
            <person name="Kim E."/>
            <person name="Hemme C."/>
            <person name="Fields M.W."/>
            <person name="He Z."/>
            <person name="Zhou J."/>
            <person name="Richardson P."/>
        </authorList>
    </citation>
    <scope>NUCLEOTIDE SEQUENCE [LARGE SCALE GENOMIC DNA]</scope>
    <source>
        <strain>X514</strain>
    </source>
</reference>
<name>AROB_THEPX</name>
<sequence>MDFITIDLKERSYPIYFAYDSFDKLGEIVKKHVRSSKTFIITDFNVYPLYFEKLNESLKKSRFDVSYEVIPAGETSKTMEMAQRLLEKAYDSGLLRDSSVIALGGGVVGDIAGFVAATYMRGIDFVQIPTTLLAQVDSSVGGKVAVNLKKGKNIVGAFHQPKMVYIDAAVLNTLDKREILGGLAEIIKYGIIWDFDLFEYIENNLHEILDLKEDKLKHIVKKSCEIKGKIVSLDEKEENLRSILNFGHTIGHAIEALTGYEWYIHGEAVAIGMVYACKLALNLGYIDEKYFERIFSLIQRTGLPTDYEDLHKEDIIKAIKLDKKNRSSKINFVLPCGFGKVEVISVREEEILKVLK</sequence>
<evidence type="ECO:0000255" key="1">
    <source>
        <dbReference type="HAMAP-Rule" id="MF_00110"/>
    </source>
</evidence>
<organism>
    <name type="scientific">Thermoanaerobacter sp. (strain X514)</name>
    <dbReference type="NCBI Taxonomy" id="399726"/>
    <lineage>
        <taxon>Bacteria</taxon>
        <taxon>Bacillati</taxon>
        <taxon>Bacillota</taxon>
        <taxon>Clostridia</taxon>
        <taxon>Thermoanaerobacterales</taxon>
        <taxon>Thermoanaerobacteraceae</taxon>
        <taxon>Thermoanaerobacter</taxon>
    </lineage>
</organism>
<proteinExistence type="inferred from homology"/>
<comment type="function">
    <text evidence="1">Catalyzes the conversion of 3-deoxy-D-arabino-heptulosonate 7-phosphate (DAHP) to dehydroquinate (DHQ).</text>
</comment>
<comment type="catalytic activity">
    <reaction evidence="1">
        <text>7-phospho-2-dehydro-3-deoxy-D-arabino-heptonate = 3-dehydroquinate + phosphate</text>
        <dbReference type="Rhea" id="RHEA:21968"/>
        <dbReference type="ChEBI" id="CHEBI:32364"/>
        <dbReference type="ChEBI" id="CHEBI:43474"/>
        <dbReference type="ChEBI" id="CHEBI:58394"/>
        <dbReference type="EC" id="4.2.3.4"/>
    </reaction>
</comment>
<comment type="cofactor">
    <cofactor evidence="1">
        <name>Co(2+)</name>
        <dbReference type="ChEBI" id="CHEBI:48828"/>
    </cofactor>
    <cofactor evidence="1">
        <name>Zn(2+)</name>
        <dbReference type="ChEBI" id="CHEBI:29105"/>
    </cofactor>
    <text evidence="1">Binds 1 divalent metal cation per subunit. Can use either Co(2+) or Zn(2+).</text>
</comment>
<comment type="cofactor">
    <cofactor evidence="1">
        <name>NAD(+)</name>
        <dbReference type="ChEBI" id="CHEBI:57540"/>
    </cofactor>
</comment>
<comment type="pathway">
    <text evidence="1">Metabolic intermediate biosynthesis; chorismate biosynthesis; chorismate from D-erythrose 4-phosphate and phosphoenolpyruvate: step 2/7.</text>
</comment>
<comment type="subcellular location">
    <subcellularLocation>
        <location evidence="1">Cytoplasm</location>
    </subcellularLocation>
</comment>
<comment type="similarity">
    <text evidence="1">Belongs to the sugar phosphate cyclases superfamily. Dehydroquinate synthase family.</text>
</comment>